<accession>A0PP79</accession>
<reference key="1">
    <citation type="journal article" date="2007" name="Genome Res.">
        <title>Reductive evolution and niche adaptation inferred from the genome of Mycobacterium ulcerans, the causative agent of Buruli ulcer.</title>
        <authorList>
            <person name="Stinear T.P."/>
            <person name="Seemann T."/>
            <person name="Pidot S."/>
            <person name="Frigui W."/>
            <person name="Reysset G."/>
            <person name="Garnier T."/>
            <person name="Meurice G."/>
            <person name="Simon D."/>
            <person name="Bouchier C."/>
            <person name="Ma L."/>
            <person name="Tichit M."/>
            <person name="Porter J.L."/>
            <person name="Ryan J."/>
            <person name="Johnson P.D.R."/>
            <person name="Davies J.K."/>
            <person name="Jenkin G.A."/>
            <person name="Small P.L.C."/>
            <person name="Jones L.M."/>
            <person name="Tekaia F."/>
            <person name="Laval F."/>
            <person name="Daffe M."/>
            <person name="Parkhill J."/>
            <person name="Cole S.T."/>
        </authorList>
    </citation>
    <scope>NUCLEOTIDE SEQUENCE [LARGE SCALE GENOMIC DNA]</scope>
    <source>
        <strain>Agy99</strain>
    </source>
</reference>
<proteinExistence type="inferred from homology"/>
<name>ASSY_MYCUA</name>
<organism>
    <name type="scientific">Mycobacterium ulcerans (strain Agy99)</name>
    <dbReference type="NCBI Taxonomy" id="362242"/>
    <lineage>
        <taxon>Bacteria</taxon>
        <taxon>Bacillati</taxon>
        <taxon>Actinomycetota</taxon>
        <taxon>Actinomycetes</taxon>
        <taxon>Mycobacteriales</taxon>
        <taxon>Mycobacteriaceae</taxon>
        <taxon>Mycobacterium</taxon>
        <taxon>Mycobacterium ulcerans group</taxon>
    </lineage>
</organism>
<sequence length="398" mass="43831">MSERVILAYSGGLDTSVAISWIGEETGREVVAVAIDLGQGGEDMEVVCQRALDCGAVEAVVVDARDEFAEGYCLPTILNNALYMDRYPLVSAISRPLIVKHLVEAAREHGGGIVAHGCTGKGNDQVRFEVGFASLAPDLEVLAPVRDYAWTREKAIAFAEENAIPINVTKRSPFSIDQNVWGRAVETGFLEHLWNAPTKDVYSYTEDPTVNWNTPDEVIVGFERGMPVSIDGNAVTMLQAIEELNRRAGAQGVGRLDVVEDRLVGIKSREIYEAPGAMVLITAHAELEHVTLERELARFKRHTDQRWAELVYDGLWYSPLKTALESFVAKTQEHVSGEIRLVLHGGHIAVNGRRSAESLYDFNLATYDEGDTFDQSAAKGFVYVHGLSSKLSARRDLQ</sequence>
<comment type="catalytic activity">
    <reaction evidence="1">
        <text>L-citrulline + L-aspartate + ATP = 2-(N(omega)-L-arginino)succinate + AMP + diphosphate + H(+)</text>
        <dbReference type="Rhea" id="RHEA:10932"/>
        <dbReference type="ChEBI" id="CHEBI:15378"/>
        <dbReference type="ChEBI" id="CHEBI:29991"/>
        <dbReference type="ChEBI" id="CHEBI:30616"/>
        <dbReference type="ChEBI" id="CHEBI:33019"/>
        <dbReference type="ChEBI" id="CHEBI:57472"/>
        <dbReference type="ChEBI" id="CHEBI:57743"/>
        <dbReference type="ChEBI" id="CHEBI:456215"/>
        <dbReference type="EC" id="6.3.4.5"/>
    </reaction>
</comment>
<comment type="pathway">
    <text evidence="1">Amino-acid biosynthesis; L-arginine biosynthesis; L-arginine from L-ornithine and carbamoyl phosphate: step 2/3.</text>
</comment>
<comment type="subunit">
    <text evidence="1">Homotetramer.</text>
</comment>
<comment type="subcellular location">
    <subcellularLocation>
        <location evidence="1">Cytoplasm</location>
    </subcellularLocation>
</comment>
<comment type="similarity">
    <text evidence="1">Belongs to the argininosuccinate synthase family. Type 1 subfamily.</text>
</comment>
<dbReference type="EC" id="6.3.4.5" evidence="1"/>
<dbReference type="EMBL" id="CP000325">
    <property type="protein sequence ID" value="ABL04148.1"/>
    <property type="molecule type" value="Genomic_DNA"/>
</dbReference>
<dbReference type="RefSeq" id="WP_011739768.1">
    <property type="nucleotide sequence ID" value="NC_008611.1"/>
</dbReference>
<dbReference type="SMR" id="A0PP79"/>
<dbReference type="KEGG" id="mul:MUL_1650"/>
<dbReference type="eggNOG" id="COG0137">
    <property type="taxonomic scope" value="Bacteria"/>
</dbReference>
<dbReference type="HOGENOM" id="CLU_032784_4_2_11"/>
<dbReference type="UniPathway" id="UPA00068">
    <property type="reaction ID" value="UER00113"/>
</dbReference>
<dbReference type="Proteomes" id="UP000000765">
    <property type="component" value="Chromosome"/>
</dbReference>
<dbReference type="GO" id="GO:0005737">
    <property type="term" value="C:cytoplasm"/>
    <property type="evidence" value="ECO:0007669"/>
    <property type="project" value="UniProtKB-SubCell"/>
</dbReference>
<dbReference type="GO" id="GO:0004055">
    <property type="term" value="F:argininosuccinate synthase activity"/>
    <property type="evidence" value="ECO:0007669"/>
    <property type="project" value="UniProtKB-UniRule"/>
</dbReference>
<dbReference type="GO" id="GO:0005524">
    <property type="term" value="F:ATP binding"/>
    <property type="evidence" value="ECO:0007669"/>
    <property type="project" value="UniProtKB-UniRule"/>
</dbReference>
<dbReference type="GO" id="GO:0000053">
    <property type="term" value="P:argininosuccinate metabolic process"/>
    <property type="evidence" value="ECO:0007669"/>
    <property type="project" value="TreeGrafter"/>
</dbReference>
<dbReference type="GO" id="GO:0006526">
    <property type="term" value="P:L-arginine biosynthetic process"/>
    <property type="evidence" value="ECO:0007669"/>
    <property type="project" value="UniProtKB-UniRule"/>
</dbReference>
<dbReference type="GO" id="GO:0000050">
    <property type="term" value="P:urea cycle"/>
    <property type="evidence" value="ECO:0007669"/>
    <property type="project" value="TreeGrafter"/>
</dbReference>
<dbReference type="CDD" id="cd01999">
    <property type="entry name" value="ASS"/>
    <property type="match status" value="1"/>
</dbReference>
<dbReference type="FunFam" id="3.40.50.620:FF:000038">
    <property type="entry name" value="Argininosuccinate synthase"/>
    <property type="match status" value="1"/>
</dbReference>
<dbReference type="FunFam" id="3.90.1260.10:FF:000006">
    <property type="entry name" value="Argininosuccinate synthase"/>
    <property type="match status" value="1"/>
</dbReference>
<dbReference type="Gene3D" id="3.90.1260.10">
    <property type="entry name" value="Argininosuccinate synthetase, chain A, domain 2"/>
    <property type="match status" value="1"/>
</dbReference>
<dbReference type="Gene3D" id="3.40.50.620">
    <property type="entry name" value="HUPs"/>
    <property type="match status" value="1"/>
</dbReference>
<dbReference type="Gene3D" id="1.20.5.470">
    <property type="entry name" value="Single helix bin"/>
    <property type="match status" value="1"/>
</dbReference>
<dbReference type="HAMAP" id="MF_00005">
    <property type="entry name" value="Arg_succ_synth_type1"/>
    <property type="match status" value="1"/>
</dbReference>
<dbReference type="InterPro" id="IPR048268">
    <property type="entry name" value="Arginosuc_syn_C"/>
</dbReference>
<dbReference type="InterPro" id="IPR048267">
    <property type="entry name" value="Arginosuc_syn_N"/>
</dbReference>
<dbReference type="InterPro" id="IPR001518">
    <property type="entry name" value="Arginosuc_synth"/>
</dbReference>
<dbReference type="InterPro" id="IPR018223">
    <property type="entry name" value="Arginosuc_synth_CS"/>
</dbReference>
<dbReference type="InterPro" id="IPR023434">
    <property type="entry name" value="Arginosuc_synth_type_1_subfam"/>
</dbReference>
<dbReference type="InterPro" id="IPR024074">
    <property type="entry name" value="AS_cat/multimer_dom_body"/>
</dbReference>
<dbReference type="InterPro" id="IPR014729">
    <property type="entry name" value="Rossmann-like_a/b/a_fold"/>
</dbReference>
<dbReference type="NCBIfam" id="TIGR00032">
    <property type="entry name" value="argG"/>
    <property type="match status" value="1"/>
</dbReference>
<dbReference type="NCBIfam" id="NF001770">
    <property type="entry name" value="PRK00509.1"/>
    <property type="match status" value="1"/>
</dbReference>
<dbReference type="PANTHER" id="PTHR11587">
    <property type="entry name" value="ARGININOSUCCINATE SYNTHASE"/>
    <property type="match status" value="1"/>
</dbReference>
<dbReference type="PANTHER" id="PTHR11587:SF2">
    <property type="entry name" value="ARGININOSUCCINATE SYNTHASE"/>
    <property type="match status" value="1"/>
</dbReference>
<dbReference type="Pfam" id="PF20979">
    <property type="entry name" value="Arginosuc_syn_C"/>
    <property type="match status" value="1"/>
</dbReference>
<dbReference type="Pfam" id="PF00764">
    <property type="entry name" value="Arginosuc_synth"/>
    <property type="match status" value="1"/>
</dbReference>
<dbReference type="SUPFAM" id="SSF52402">
    <property type="entry name" value="Adenine nucleotide alpha hydrolases-like"/>
    <property type="match status" value="1"/>
</dbReference>
<dbReference type="SUPFAM" id="SSF69864">
    <property type="entry name" value="Argininosuccinate synthetase, C-terminal domain"/>
    <property type="match status" value="1"/>
</dbReference>
<dbReference type="PROSITE" id="PS00564">
    <property type="entry name" value="ARGININOSUCCIN_SYN_1"/>
    <property type="match status" value="1"/>
</dbReference>
<dbReference type="PROSITE" id="PS00565">
    <property type="entry name" value="ARGININOSUCCIN_SYN_2"/>
    <property type="match status" value="1"/>
</dbReference>
<keyword id="KW-0028">Amino-acid biosynthesis</keyword>
<keyword id="KW-0055">Arginine biosynthesis</keyword>
<keyword id="KW-0067">ATP-binding</keyword>
<keyword id="KW-0963">Cytoplasm</keyword>
<keyword id="KW-0436">Ligase</keyword>
<keyword id="KW-0547">Nucleotide-binding</keyword>
<protein>
    <recommendedName>
        <fullName evidence="1">Argininosuccinate synthase</fullName>
        <ecNumber evidence="1">6.3.4.5</ecNumber>
    </recommendedName>
    <alternativeName>
        <fullName evidence="1">Citrulline--aspartate ligase</fullName>
    </alternativeName>
</protein>
<gene>
    <name evidence="1" type="primary">argG</name>
    <name type="ordered locus">MUL_1650</name>
</gene>
<evidence type="ECO:0000255" key="1">
    <source>
        <dbReference type="HAMAP-Rule" id="MF_00005"/>
    </source>
</evidence>
<feature type="chain" id="PRO_1000000412" description="Argininosuccinate synthase">
    <location>
        <begin position="1"/>
        <end position="398"/>
    </location>
</feature>
<feature type="binding site" evidence="1">
    <location>
        <begin position="8"/>
        <end position="16"/>
    </location>
    <ligand>
        <name>ATP</name>
        <dbReference type="ChEBI" id="CHEBI:30616"/>
    </ligand>
</feature>
<feature type="binding site" evidence="1">
    <location>
        <position position="87"/>
    </location>
    <ligand>
        <name>L-citrulline</name>
        <dbReference type="ChEBI" id="CHEBI:57743"/>
    </ligand>
</feature>
<feature type="binding site" evidence="1">
    <location>
        <position position="117"/>
    </location>
    <ligand>
        <name>ATP</name>
        <dbReference type="ChEBI" id="CHEBI:30616"/>
    </ligand>
</feature>
<feature type="binding site" evidence="1">
    <location>
        <position position="119"/>
    </location>
    <ligand>
        <name>L-aspartate</name>
        <dbReference type="ChEBI" id="CHEBI:29991"/>
    </ligand>
</feature>
<feature type="binding site" evidence="1">
    <location>
        <position position="123"/>
    </location>
    <ligand>
        <name>L-aspartate</name>
        <dbReference type="ChEBI" id="CHEBI:29991"/>
    </ligand>
</feature>
<feature type="binding site" evidence="1">
    <location>
        <position position="123"/>
    </location>
    <ligand>
        <name>L-citrulline</name>
        <dbReference type="ChEBI" id="CHEBI:57743"/>
    </ligand>
</feature>
<feature type="binding site" evidence="1">
    <location>
        <position position="124"/>
    </location>
    <ligand>
        <name>L-aspartate</name>
        <dbReference type="ChEBI" id="CHEBI:29991"/>
    </ligand>
</feature>
<feature type="binding site" evidence="1">
    <location>
        <position position="127"/>
    </location>
    <ligand>
        <name>L-citrulline</name>
        <dbReference type="ChEBI" id="CHEBI:57743"/>
    </ligand>
</feature>
<feature type="binding site" evidence="1">
    <location>
        <position position="175"/>
    </location>
    <ligand>
        <name>L-citrulline</name>
        <dbReference type="ChEBI" id="CHEBI:57743"/>
    </ligand>
</feature>
<feature type="binding site" evidence="1">
    <location>
        <position position="260"/>
    </location>
    <ligand>
        <name>L-citrulline</name>
        <dbReference type="ChEBI" id="CHEBI:57743"/>
    </ligand>
</feature>
<feature type="binding site" evidence="1">
    <location>
        <position position="272"/>
    </location>
    <ligand>
        <name>L-citrulline</name>
        <dbReference type="ChEBI" id="CHEBI:57743"/>
    </ligand>
</feature>